<protein>
    <recommendedName>
        <fullName evidence="1">Argininosuccinate synthase</fullName>
        <ecNumber evidence="1">6.3.4.5</ecNumber>
    </recommendedName>
    <alternativeName>
        <fullName evidence="1">Citrulline--aspartate ligase</fullName>
    </alternativeName>
</protein>
<organism>
    <name type="scientific">Deinococcus deserti (strain DSM 17065 / CIP 109153 / LMG 22923 / VCD115)</name>
    <dbReference type="NCBI Taxonomy" id="546414"/>
    <lineage>
        <taxon>Bacteria</taxon>
        <taxon>Thermotogati</taxon>
        <taxon>Deinococcota</taxon>
        <taxon>Deinococci</taxon>
        <taxon>Deinococcales</taxon>
        <taxon>Deinococcaceae</taxon>
        <taxon>Deinococcus</taxon>
    </lineage>
</organism>
<keyword id="KW-0028">Amino-acid biosynthesis</keyword>
<keyword id="KW-0055">Arginine biosynthesis</keyword>
<keyword id="KW-0067">ATP-binding</keyword>
<keyword id="KW-0963">Cytoplasm</keyword>
<keyword id="KW-0436">Ligase</keyword>
<keyword id="KW-0547">Nucleotide-binding</keyword>
<keyword id="KW-1185">Reference proteome</keyword>
<sequence>MAKDKIVLAYSGGLDTSIILKWLQTERNYDVVCFTADLGQGDEVEEARVKALNTGAVAAYALDLREEFVRDYVFPMFRSSALYEGYYLLGTSIARPLIAKKMVEIAQKEGAVAVSHGATGKGNDQVRFEMTAYALQPDIVTVAPWRDWEFQGRADLEAFAHEHGIPVPTTKKDPWSTDANMLHISYEGGILEDPWAEPPAHMFKLTVAPEEAPDEAEYVEIEFLNGDAVAINGETLSPAALLDRANEIGGRHGVGRVDLVENRFVGMKSRGVYETPGGTLLYHARRAVESLTLDREVLHQRDALGPKYAELVYNGFWFAPEREALQVYMDHVAKAVTGTARLKLYKGNCIVAGRKAERSLYDKDLVSFEAGGDYNQHDAGAFIKLNALRMRVQARVEAKAGQKDKAGD</sequence>
<name>ASSY_DEIDV</name>
<accession>C1CXR6</accession>
<reference key="1">
    <citation type="journal article" date="2009" name="PLoS Genet.">
        <title>Alliance of proteomics and genomics to unravel the specificities of Sahara bacterium Deinococcus deserti.</title>
        <authorList>
            <person name="de Groot A."/>
            <person name="Dulermo R."/>
            <person name="Ortet P."/>
            <person name="Blanchard L."/>
            <person name="Guerin P."/>
            <person name="Fernandez B."/>
            <person name="Vacherie B."/>
            <person name="Dossat C."/>
            <person name="Jolivet E."/>
            <person name="Siguier P."/>
            <person name="Chandler M."/>
            <person name="Barakat M."/>
            <person name="Dedieu A."/>
            <person name="Barbe V."/>
            <person name="Heulin T."/>
            <person name="Sommer S."/>
            <person name="Achouak W."/>
            <person name="Armengaud J."/>
        </authorList>
    </citation>
    <scope>NUCLEOTIDE SEQUENCE [LARGE SCALE GENOMIC DNA]</scope>
    <source>
        <strain>DSM 17065 / CIP 109153 / LMG 22923 / VCD115</strain>
    </source>
</reference>
<proteinExistence type="inferred from homology"/>
<comment type="catalytic activity">
    <reaction evidence="1">
        <text>L-citrulline + L-aspartate + ATP = 2-(N(omega)-L-arginino)succinate + AMP + diphosphate + H(+)</text>
        <dbReference type="Rhea" id="RHEA:10932"/>
        <dbReference type="ChEBI" id="CHEBI:15378"/>
        <dbReference type="ChEBI" id="CHEBI:29991"/>
        <dbReference type="ChEBI" id="CHEBI:30616"/>
        <dbReference type="ChEBI" id="CHEBI:33019"/>
        <dbReference type="ChEBI" id="CHEBI:57472"/>
        <dbReference type="ChEBI" id="CHEBI:57743"/>
        <dbReference type="ChEBI" id="CHEBI:456215"/>
        <dbReference type="EC" id="6.3.4.5"/>
    </reaction>
</comment>
<comment type="pathway">
    <text evidence="1">Amino-acid biosynthesis; L-arginine biosynthesis; L-arginine from L-ornithine and carbamoyl phosphate: step 2/3.</text>
</comment>
<comment type="subunit">
    <text evidence="1">Homotetramer.</text>
</comment>
<comment type="subcellular location">
    <subcellularLocation>
        <location evidence="1">Cytoplasm</location>
    </subcellularLocation>
</comment>
<comment type="similarity">
    <text evidence="1">Belongs to the argininosuccinate synthase family. Type 1 subfamily.</text>
</comment>
<feature type="chain" id="PRO_1000201678" description="Argininosuccinate synthase">
    <location>
        <begin position="1"/>
        <end position="408"/>
    </location>
</feature>
<feature type="binding site" evidence="1">
    <location>
        <begin position="9"/>
        <end position="17"/>
    </location>
    <ligand>
        <name>ATP</name>
        <dbReference type="ChEBI" id="CHEBI:30616"/>
    </ligand>
</feature>
<feature type="binding site" evidence="1">
    <location>
        <position position="36"/>
    </location>
    <ligand>
        <name>ATP</name>
        <dbReference type="ChEBI" id="CHEBI:30616"/>
    </ligand>
</feature>
<feature type="binding site" evidence="1">
    <location>
        <position position="87"/>
    </location>
    <ligand>
        <name>L-citrulline</name>
        <dbReference type="ChEBI" id="CHEBI:57743"/>
    </ligand>
</feature>
<feature type="binding site" evidence="1">
    <location>
        <position position="92"/>
    </location>
    <ligand>
        <name>L-citrulline</name>
        <dbReference type="ChEBI" id="CHEBI:57743"/>
    </ligand>
</feature>
<feature type="binding site" evidence="1">
    <location>
        <position position="117"/>
    </location>
    <ligand>
        <name>ATP</name>
        <dbReference type="ChEBI" id="CHEBI:30616"/>
    </ligand>
</feature>
<feature type="binding site" evidence="1">
    <location>
        <position position="119"/>
    </location>
    <ligand>
        <name>L-aspartate</name>
        <dbReference type="ChEBI" id="CHEBI:29991"/>
    </ligand>
</feature>
<feature type="binding site" evidence="1">
    <location>
        <position position="123"/>
    </location>
    <ligand>
        <name>L-aspartate</name>
        <dbReference type="ChEBI" id="CHEBI:29991"/>
    </ligand>
</feature>
<feature type="binding site" evidence="1">
    <location>
        <position position="123"/>
    </location>
    <ligand>
        <name>L-citrulline</name>
        <dbReference type="ChEBI" id="CHEBI:57743"/>
    </ligand>
</feature>
<feature type="binding site" evidence="1">
    <location>
        <position position="124"/>
    </location>
    <ligand>
        <name>L-aspartate</name>
        <dbReference type="ChEBI" id="CHEBI:29991"/>
    </ligand>
</feature>
<feature type="binding site" evidence="1">
    <location>
        <position position="127"/>
    </location>
    <ligand>
        <name>L-citrulline</name>
        <dbReference type="ChEBI" id="CHEBI:57743"/>
    </ligand>
</feature>
<feature type="binding site" evidence="1">
    <location>
        <position position="176"/>
    </location>
    <ligand>
        <name>L-citrulline</name>
        <dbReference type="ChEBI" id="CHEBI:57743"/>
    </ligand>
</feature>
<feature type="binding site" evidence="1">
    <location>
        <position position="185"/>
    </location>
    <ligand>
        <name>L-citrulline</name>
        <dbReference type="ChEBI" id="CHEBI:57743"/>
    </ligand>
</feature>
<feature type="binding site" evidence="1">
    <location>
        <position position="261"/>
    </location>
    <ligand>
        <name>L-citrulline</name>
        <dbReference type="ChEBI" id="CHEBI:57743"/>
    </ligand>
</feature>
<feature type="binding site" evidence="1">
    <location>
        <position position="273"/>
    </location>
    <ligand>
        <name>L-citrulline</name>
        <dbReference type="ChEBI" id="CHEBI:57743"/>
    </ligand>
</feature>
<dbReference type="EC" id="6.3.4.5" evidence="1"/>
<dbReference type="EMBL" id="CP001114">
    <property type="protein sequence ID" value="ACO44872.1"/>
    <property type="molecule type" value="Genomic_DNA"/>
</dbReference>
<dbReference type="RefSeq" id="WP_012691995.1">
    <property type="nucleotide sequence ID" value="NC_012526.1"/>
</dbReference>
<dbReference type="SMR" id="C1CXR6"/>
<dbReference type="STRING" id="546414.Deide_00720"/>
<dbReference type="PaxDb" id="546414-Deide_00720"/>
<dbReference type="KEGG" id="ddr:Deide_00720"/>
<dbReference type="eggNOG" id="COG0137">
    <property type="taxonomic scope" value="Bacteria"/>
</dbReference>
<dbReference type="HOGENOM" id="CLU_032784_4_2_0"/>
<dbReference type="OrthoDB" id="9801641at2"/>
<dbReference type="UniPathway" id="UPA00068">
    <property type="reaction ID" value="UER00113"/>
</dbReference>
<dbReference type="Proteomes" id="UP000002208">
    <property type="component" value="Chromosome"/>
</dbReference>
<dbReference type="GO" id="GO:0005737">
    <property type="term" value="C:cytoplasm"/>
    <property type="evidence" value="ECO:0007669"/>
    <property type="project" value="UniProtKB-SubCell"/>
</dbReference>
<dbReference type="GO" id="GO:0004055">
    <property type="term" value="F:argininosuccinate synthase activity"/>
    <property type="evidence" value="ECO:0007669"/>
    <property type="project" value="UniProtKB-UniRule"/>
</dbReference>
<dbReference type="GO" id="GO:0005524">
    <property type="term" value="F:ATP binding"/>
    <property type="evidence" value="ECO:0007669"/>
    <property type="project" value="UniProtKB-UniRule"/>
</dbReference>
<dbReference type="GO" id="GO:0000053">
    <property type="term" value="P:argininosuccinate metabolic process"/>
    <property type="evidence" value="ECO:0007669"/>
    <property type="project" value="TreeGrafter"/>
</dbReference>
<dbReference type="GO" id="GO:0006526">
    <property type="term" value="P:L-arginine biosynthetic process"/>
    <property type="evidence" value="ECO:0007669"/>
    <property type="project" value="UniProtKB-UniRule"/>
</dbReference>
<dbReference type="GO" id="GO:0000050">
    <property type="term" value="P:urea cycle"/>
    <property type="evidence" value="ECO:0007669"/>
    <property type="project" value="TreeGrafter"/>
</dbReference>
<dbReference type="CDD" id="cd01999">
    <property type="entry name" value="ASS"/>
    <property type="match status" value="1"/>
</dbReference>
<dbReference type="FunFam" id="3.40.50.620:FF:000019">
    <property type="entry name" value="Argininosuccinate synthase"/>
    <property type="match status" value="1"/>
</dbReference>
<dbReference type="FunFam" id="3.90.1260.10:FF:000007">
    <property type="entry name" value="Argininosuccinate synthase"/>
    <property type="match status" value="1"/>
</dbReference>
<dbReference type="Gene3D" id="3.90.1260.10">
    <property type="entry name" value="Argininosuccinate synthetase, chain A, domain 2"/>
    <property type="match status" value="1"/>
</dbReference>
<dbReference type="Gene3D" id="3.40.50.620">
    <property type="entry name" value="HUPs"/>
    <property type="match status" value="1"/>
</dbReference>
<dbReference type="HAMAP" id="MF_00005">
    <property type="entry name" value="Arg_succ_synth_type1"/>
    <property type="match status" value="1"/>
</dbReference>
<dbReference type="InterPro" id="IPR048268">
    <property type="entry name" value="Arginosuc_syn_C"/>
</dbReference>
<dbReference type="InterPro" id="IPR048267">
    <property type="entry name" value="Arginosuc_syn_N"/>
</dbReference>
<dbReference type="InterPro" id="IPR001518">
    <property type="entry name" value="Arginosuc_synth"/>
</dbReference>
<dbReference type="InterPro" id="IPR018223">
    <property type="entry name" value="Arginosuc_synth_CS"/>
</dbReference>
<dbReference type="InterPro" id="IPR023434">
    <property type="entry name" value="Arginosuc_synth_type_1_subfam"/>
</dbReference>
<dbReference type="InterPro" id="IPR024074">
    <property type="entry name" value="AS_cat/multimer_dom_body"/>
</dbReference>
<dbReference type="InterPro" id="IPR014729">
    <property type="entry name" value="Rossmann-like_a/b/a_fold"/>
</dbReference>
<dbReference type="NCBIfam" id="TIGR00032">
    <property type="entry name" value="argG"/>
    <property type="match status" value="1"/>
</dbReference>
<dbReference type="NCBIfam" id="NF001770">
    <property type="entry name" value="PRK00509.1"/>
    <property type="match status" value="1"/>
</dbReference>
<dbReference type="PANTHER" id="PTHR11587">
    <property type="entry name" value="ARGININOSUCCINATE SYNTHASE"/>
    <property type="match status" value="1"/>
</dbReference>
<dbReference type="PANTHER" id="PTHR11587:SF2">
    <property type="entry name" value="ARGININOSUCCINATE SYNTHASE"/>
    <property type="match status" value="1"/>
</dbReference>
<dbReference type="Pfam" id="PF20979">
    <property type="entry name" value="Arginosuc_syn_C"/>
    <property type="match status" value="1"/>
</dbReference>
<dbReference type="Pfam" id="PF00764">
    <property type="entry name" value="Arginosuc_synth"/>
    <property type="match status" value="1"/>
</dbReference>
<dbReference type="SUPFAM" id="SSF52402">
    <property type="entry name" value="Adenine nucleotide alpha hydrolases-like"/>
    <property type="match status" value="1"/>
</dbReference>
<dbReference type="SUPFAM" id="SSF69864">
    <property type="entry name" value="Argininosuccinate synthetase, C-terminal domain"/>
    <property type="match status" value="1"/>
</dbReference>
<dbReference type="PROSITE" id="PS00564">
    <property type="entry name" value="ARGININOSUCCIN_SYN_1"/>
    <property type="match status" value="1"/>
</dbReference>
<dbReference type="PROSITE" id="PS00565">
    <property type="entry name" value="ARGININOSUCCIN_SYN_2"/>
    <property type="match status" value="1"/>
</dbReference>
<evidence type="ECO:0000255" key="1">
    <source>
        <dbReference type="HAMAP-Rule" id="MF_00005"/>
    </source>
</evidence>
<gene>
    <name evidence="1" type="primary">argG</name>
    <name type="ordered locus">Deide_00720</name>
</gene>